<evidence type="ECO:0000255" key="1">
    <source>
        <dbReference type="HAMAP-Rule" id="MF_00183"/>
    </source>
</evidence>
<reference key="1">
    <citation type="journal article" date="2009" name="PLoS ONE">
        <title>Complete genome sequence of Francisella tularensis subspecies holarctica FTNF002-00.</title>
        <authorList>
            <person name="Barabote R.D."/>
            <person name="Xie G."/>
            <person name="Brettin T.S."/>
            <person name="Hinrichs S.H."/>
            <person name="Fey P.D."/>
            <person name="Jay J.J."/>
            <person name="Engle J.L."/>
            <person name="Godbole S.D."/>
            <person name="Noronha J.M."/>
            <person name="Scheuermann R.H."/>
            <person name="Zhou L.W."/>
            <person name="Lion C."/>
            <person name="Dempsey M.P."/>
        </authorList>
    </citation>
    <scope>NUCLEOTIDE SEQUENCE [LARGE SCALE GENOMIC DNA]</scope>
    <source>
        <strain>FTNF002-00 / FTA</strain>
    </source>
</reference>
<organism>
    <name type="scientific">Francisella tularensis subsp. holarctica (strain FTNF002-00 / FTA)</name>
    <dbReference type="NCBI Taxonomy" id="458234"/>
    <lineage>
        <taxon>Bacteria</taxon>
        <taxon>Pseudomonadati</taxon>
        <taxon>Pseudomonadota</taxon>
        <taxon>Gammaproteobacteria</taxon>
        <taxon>Thiotrichales</taxon>
        <taxon>Francisellaceae</taxon>
        <taxon>Francisella</taxon>
    </lineage>
</organism>
<proteinExistence type="inferred from homology"/>
<feature type="chain" id="PRO_1000020261" description="1-deoxy-D-xylulose 5-phosphate reductoisomerase">
    <location>
        <begin position="1"/>
        <end position="385"/>
    </location>
</feature>
<feature type="binding site" evidence="1">
    <location>
        <position position="13"/>
    </location>
    <ligand>
        <name>NADPH</name>
        <dbReference type="ChEBI" id="CHEBI:57783"/>
    </ligand>
</feature>
<feature type="binding site" evidence="1">
    <location>
        <position position="14"/>
    </location>
    <ligand>
        <name>NADPH</name>
        <dbReference type="ChEBI" id="CHEBI:57783"/>
    </ligand>
</feature>
<feature type="binding site" evidence="1">
    <location>
        <position position="15"/>
    </location>
    <ligand>
        <name>NADPH</name>
        <dbReference type="ChEBI" id="CHEBI:57783"/>
    </ligand>
</feature>
<feature type="binding site" evidence="1">
    <location>
        <position position="16"/>
    </location>
    <ligand>
        <name>NADPH</name>
        <dbReference type="ChEBI" id="CHEBI:57783"/>
    </ligand>
</feature>
<feature type="binding site" evidence="1">
    <location>
        <position position="40"/>
    </location>
    <ligand>
        <name>NADPH</name>
        <dbReference type="ChEBI" id="CHEBI:57783"/>
    </ligand>
</feature>
<feature type="binding site" evidence="1">
    <location>
        <position position="122"/>
    </location>
    <ligand>
        <name>NADPH</name>
        <dbReference type="ChEBI" id="CHEBI:57783"/>
    </ligand>
</feature>
<feature type="binding site" evidence="1">
    <location>
        <position position="123"/>
    </location>
    <ligand>
        <name>1-deoxy-D-xylulose 5-phosphate</name>
        <dbReference type="ChEBI" id="CHEBI:57792"/>
    </ligand>
</feature>
<feature type="binding site" evidence="1">
    <location>
        <position position="124"/>
    </location>
    <ligand>
        <name>NADPH</name>
        <dbReference type="ChEBI" id="CHEBI:57783"/>
    </ligand>
</feature>
<feature type="binding site" evidence="1">
    <location>
        <position position="148"/>
    </location>
    <ligand>
        <name>Mn(2+)</name>
        <dbReference type="ChEBI" id="CHEBI:29035"/>
    </ligand>
</feature>
<feature type="binding site" evidence="1">
    <location>
        <position position="149"/>
    </location>
    <ligand>
        <name>1-deoxy-D-xylulose 5-phosphate</name>
        <dbReference type="ChEBI" id="CHEBI:57792"/>
    </ligand>
</feature>
<feature type="binding site" evidence="1">
    <location>
        <position position="150"/>
    </location>
    <ligand>
        <name>1-deoxy-D-xylulose 5-phosphate</name>
        <dbReference type="ChEBI" id="CHEBI:57792"/>
    </ligand>
</feature>
<feature type="binding site" evidence="1">
    <location>
        <position position="150"/>
    </location>
    <ligand>
        <name>Mn(2+)</name>
        <dbReference type="ChEBI" id="CHEBI:29035"/>
    </ligand>
</feature>
<feature type="binding site" evidence="1">
    <location>
        <position position="177"/>
    </location>
    <ligand>
        <name>1-deoxy-D-xylulose 5-phosphate</name>
        <dbReference type="ChEBI" id="CHEBI:57792"/>
    </ligand>
</feature>
<feature type="binding site" evidence="1">
    <location>
        <position position="200"/>
    </location>
    <ligand>
        <name>1-deoxy-D-xylulose 5-phosphate</name>
        <dbReference type="ChEBI" id="CHEBI:57792"/>
    </ligand>
</feature>
<feature type="binding site" evidence="1">
    <location>
        <position position="206"/>
    </location>
    <ligand>
        <name>NADPH</name>
        <dbReference type="ChEBI" id="CHEBI:57783"/>
    </ligand>
</feature>
<feature type="binding site" evidence="1">
    <location>
        <position position="213"/>
    </location>
    <ligand>
        <name>1-deoxy-D-xylulose 5-phosphate</name>
        <dbReference type="ChEBI" id="CHEBI:57792"/>
    </ligand>
</feature>
<feature type="binding site" evidence="1">
    <location>
        <position position="218"/>
    </location>
    <ligand>
        <name>1-deoxy-D-xylulose 5-phosphate</name>
        <dbReference type="ChEBI" id="CHEBI:57792"/>
    </ligand>
</feature>
<feature type="binding site" evidence="1">
    <location>
        <position position="219"/>
    </location>
    <ligand>
        <name>1-deoxy-D-xylulose 5-phosphate</name>
        <dbReference type="ChEBI" id="CHEBI:57792"/>
    </ligand>
</feature>
<feature type="binding site" evidence="1">
    <location>
        <position position="222"/>
    </location>
    <ligand>
        <name>1-deoxy-D-xylulose 5-phosphate</name>
        <dbReference type="ChEBI" id="CHEBI:57792"/>
    </ligand>
</feature>
<feature type="binding site" evidence="1">
    <location>
        <position position="222"/>
    </location>
    <ligand>
        <name>Mn(2+)</name>
        <dbReference type="ChEBI" id="CHEBI:29035"/>
    </ligand>
</feature>
<name>DXR_FRATF</name>
<sequence length="385" mass="42829">MFKKTKITILGATGSIGDSTLAVIRETNDFEVFALTAFSNVEKLAELCQEFKPKFAVVPDLSKKQKLQSLVTDVEVLVGESGLEKVSSLAEIDIVMSAIVGIAGLKPTFAAAKAGKKILLANKESLVTAGHLLIDEVVKNNAQLIPVDSEHNAIFQCIDNHDKKCLPEIDKIILTASGGPFRDKQLHELTDVTPEQACNHPNWQMGRKISVDSSTMVNKALEVIEAYWLFSVSADKIGVLIHPQSVTHSIVRYVDGSYIAQLGVPDMKTPIANAMYYPKRGSVNVESLDFTKYQLTFREACFERFEALKIVFNNLQNKNYAANIVFNAANEELVAAFLNKKIKYLEIIEVNKKVTKELNFENPKNIEEVFEIDRKTREYVDSVLG</sequence>
<accession>A7NAP0</accession>
<protein>
    <recommendedName>
        <fullName evidence="1">1-deoxy-D-xylulose 5-phosphate reductoisomerase</fullName>
        <shortName evidence="1">DXP reductoisomerase</shortName>
        <ecNumber evidence="1">1.1.1.267</ecNumber>
    </recommendedName>
    <alternativeName>
        <fullName evidence="1">1-deoxyxylulose-5-phosphate reductoisomerase</fullName>
    </alternativeName>
    <alternativeName>
        <fullName evidence="1">2-C-methyl-D-erythritol 4-phosphate synthase</fullName>
    </alternativeName>
</protein>
<dbReference type="EC" id="1.1.1.267" evidence="1"/>
<dbReference type="EMBL" id="CP000803">
    <property type="protein sequence ID" value="ABU61043.1"/>
    <property type="molecule type" value="Genomic_DNA"/>
</dbReference>
<dbReference type="RefSeq" id="WP_003014851.1">
    <property type="nucleotide sequence ID" value="NC_009749.1"/>
</dbReference>
<dbReference type="SMR" id="A7NAP0"/>
<dbReference type="KEGG" id="fta:FTA_0567"/>
<dbReference type="HOGENOM" id="CLU_035714_4_0_6"/>
<dbReference type="UniPathway" id="UPA00056">
    <property type="reaction ID" value="UER00092"/>
</dbReference>
<dbReference type="GO" id="GO:0030604">
    <property type="term" value="F:1-deoxy-D-xylulose-5-phosphate reductoisomerase activity"/>
    <property type="evidence" value="ECO:0007669"/>
    <property type="project" value="UniProtKB-UniRule"/>
</dbReference>
<dbReference type="GO" id="GO:0030145">
    <property type="term" value="F:manganese ion binding"/>
    <property type="evidence" value="ECO:0007669"/>
    <property type="project" value="TreeGrafter"/>
</dbReference>
<dbReference type="GO" id="GO:0070402">
    <property type="term" value="F:NADPH binding"/>
    <property type="evidence" value="ECO:0007669"/>
    <property type="project" value="InterPro"/>
</dbReference>
<dbReference type="GO" id="GO:0051484">
    <property type="term" value="P:isopentenyl diphosphate biosynthetic process, methylerythritol 4-phosphate pathway involved in terpenoid biosynthetic process"/>
    <property type="evidence" value="ECO:0007669"/>
    <property type="project" value="TreeGrafter"/>
</dbReference>
<dbReference type="FunFam" id="3.40.50.720:FF:000045">
    <property type="entry name" value="1-deoxy-D-xylulose 5-phosphate reductoisomerase"/>
    <property type="match status" value="1"/>
</dbReference>
<dbReference type="Gene3D" id="1.10.1740.10">
    <property type="match status" value="1"/>
</dbReference>
<dbReference type="Gene3D" id="3.40.50.720">
    <property type="entry name" value="NAD(P)-binding Rossmann-like Domain"/>
    <property type="match status" value="1"/>
</dbReference>
<dbReference type="HAMAP" id="MF_00183">
    <property type="entry name" value="DXP_reductoisom"/>
    <property type="match status" value="1"/>
</dbReference>
<dbReference type="InterPro" id="IPR003821">
    <property type="entry name" value="DXP_reductoisomerase"/>
</dbReference>
<dbReference type="InterPro" id="IPR013644">
    <property type="entry name" value="DXP_reductoisomerase_C"/>
</dbReference>
<dbReference type="InterPro" id="IPR013512">
    <property type="entry name" value="DXP_reductoisomerase_N"/>
</dbReference>
<dbReference type="InterPro" id="IPR026877">
    <property type="entry name" value="DXPR_C"/>
</dbReference>
<dbReference type="InterPro" id="IPR036169">
    <property type="entry name" value="DXPR_C_sf"/>
</dbReference>
<dbReference type="InterPro" id="IPR036291">
    <property type="entry name" value="NAD(P)-bd_dom_sf"/>
</dbReference>
<dbReference type="NCBIfam" id="TIGR00243">
    <property type="entry name" value="Dxr"/>
    <property type="match status" value="1"/>
</dbReference>
<dbReference type="PANTHER" id="PTHR30525">
    <property type="entry name" value="1-DEOXY-D-XYLULOSE 5-PHOSPHATE REDUCTOISOMERASE"/>
    <property type="match status" value="1"/>
</dbReference>
<dbReference type="PANTHER" id="PTHR30525:SF0">
    <property type="entry name" value="1-DEOXY-D-XYLULOSE 5-PHOSPHATE REDUCTOISOMERASE, CHLOROPLASTIC"/>
    <property type="match status" value="1"/>
</dbReference>
<dbReference type="Pfam" id="PF08436">
    <property type="entry name" value="DXP_redisom_C"/>
    <property type="match status" value="1"/>
</dbReference>
<dbReference type="Pfam" id="PF02670">
    <property type="entry name" value="DXP_reductoisom"/>
    <property type="match status" value="1"/>
</dbReference>
<dbReference type="Pfam" id="PF13288">
    <property type="entry name" value="DXPR_C"/>
    <property type="match status" value="1"/>
</dbReference>
<dbReference type="PIRSF" id="PIRSF006205">
    <property type="entry name" value="Dxp_reductismrs"/>
    <property type="match status" value="1"/>
</dbReference>
<dbReference type="SUPFAM" id="SSF69055">
    <property type="entry name" value="1-deoxy-D-xylulose-5-phosphate reductoisomerase, C-terminal domain"/>
    <property type="match status" value="1"/>
</dbReference>
<dbReference type="SUPFAM" id="SSF55347">
    <property type="entry name" value="Glyceraldehyde-3-phosphate dehydrogenase-like, C-terminal domain"/>
    <property type="match status" value="1"/>
</dbReference>
<dbReference type="SUPFAM" id="SSF51735">
    <property type="entry name" value="NAD(P)-binding Rossmann-fold domains"/>
    <property type="match status" value="1"/>
</dbReference>
<comment type="function">
    <text evidence="1">Catalyzes the NADPH-dependent rearrangement and reduction of 1-deoxy-D-xylulose-5-phosphate (DXP) to 2-C-methyl-D-erythritol 4-phosphate (MEP).</text>
</comment>
<comment type="catalytic activity">
    <reaction evidence="1">
        <text>2-C-methyl-D-erythritol 4-phosphate + NADP(+) = 1-deoxy-D-xylulose 5-phosphate + NADPH + H(+)</text>
        <dbReference type="Rhea" id="RHEA:13717"/>
        <dbReference type="ChEBI" id="CHEBI:15378"/>
        <dbReference type="ChEBI" id="CHEBI:57783"/>
        <dbReference type="ChEBI" id="CHEBI:57792"/>
        <dbReference type="ChEBI" id="CHEBI:58262"/>
        <dbReference type="ChEBI" id="CHEBI:58349"/>
        <dbReference type="EC" id="1.1.1.267"/>
    </reaction>
    <physiologicalReaction direction="right-to-left" evidence="1">
        <dbReference type="Rhea" id="RHEA:13719"/>
    </physiologicalReaction>
</comment>
<comment type="cofactor">
    <cofactor evidence="1">
        <name>Mg(2+)</name>
        <dbReference type="ChEBI" id="CHEBI:18420"/>
    </cofactor>
    <cofactor evidence="1">
        <name>Mn(2+)</name>
        <dbReference type="ChEBI" id="CHEBI:29035"/>
    </cofactor>
</comment>
<comment type="pathway">
    <text evidence="1">Isoprenoid biosynthesis; isopentenyl diphosphate biosynthesis via DXP pathway; isopentenyl diphosphate from 1-deoxy-D-xylulose 5-phosphate: step 1/6.</text>
</comment>
<comment type="similarity">
    <text evidence="1">Belongs to the DXR family.</text>
</comment>
<gene>
    <name evidence="1" type="primary">dxr</name>
    <name type="ordered locus">FTA_0567</name>
</gene>
<keyword id="KW-0414">Isoprene biosynthesis</keyword>
<keyword id="KW-0464">Manganese</keyword>
<keyword id="KW-0479">Metal-binding</keyword>
<keyword id="KW-0521">NADP</keyword>
<keyword id="KW-0560">Oxidoreductase</keyword>